<dbReference type="EC" id="2.3.2.27" evidence="6"/>
<dbReference type="EMBL" id="D87076">
    <property type="protein sequence ID" value="BAA13245.2"/>
    <property type="status" value="ALT_INIT"/>
    <property type="molecule type" value="mRNA"/>
</dbReference>
<dbReference type="EMBL" id="AK074123">
    <property type="protein sequence ID" value="BAB84949.1"/>
    <property type="status" value="ALT_FRAME"/>
    <property type="molecule type" value="mRNA"/>
</dbReference>
<dbReference type="EMBL" id="BC009307">
    <property type="protein sequence ID" value="AAH09307.2"/>
    <property type="molecule type" value="mRNA"/>
</dbReference>
<dbReference type="EMBL" id="BC021962">
    <property type="protein sequence ID" value="AAH21962.2"/>
    <property type="molecule type" value="mRNA"/>
</dbReference>
<dbReference type="EMBL" id="AC005355">
    <property type="status" value="NOT_ANNOTATED_CDS"/>
    <property type="molecule type" value="Genomic_DNA"/>
</dbReference>
<dbReference type="EMBL" id="AC106763">
    <property type="status" value="NOT_ANNOTATED_CDS"/>
    <property type="molecule type" value="Genomic_DNA"/>
</dbReference>
<dbReference type="EMBL" id="CH471062">
    <property type="protein sequence ID" value="EAW62253.1"/>
    <property type="molecule type" value="Genomic_DNA"/>
</dbReference>
<dbReference type="EMBL" id="CH471062">
    <property type="protein sequence ID" value="EAW62254.1"/>
    <property type="molecule type" value="Genomic_DNA"/>
</dbReference>
<dbReference type="EMBL" id="AJ251833">
    <property type="protein sequence ID" value="CAB94935.1"/>
    <property type="status" value="ALT_INIT"/>
    <property type="molecule type" value="mRNA"/>
</dbReference>
<dbReference type="EMBL" id="BN000288">
    <property type="protein sequence ID" value="CAE30501.1"/>
    <property type="molecule type" value="mRNA"/>
</dbReference>
<dbReference type="CCDS" id="CCDS4176.1">
    <molecule id="Q9NQC1-1"/>
</dbReference>
<dbReference type="RefSeq" id="NP_001276913.1">
    <property type="nucleotide sequence ID" value="NM_001289984.1"/>
</dbReference>
<dbReference type="RefSeq" id="NP_001276914.1">
    <property type="nucleotide sequence ID" value="NM_001289985.1"/>
</dbReference>
<dbReference type="RefSeq" id="NP_001295072.1">
    <property type="nucleotide sequence ID" value="NM_001308143.1"/>
</dbReference>
<dbReference type="RefSeq" id="NP_056103.4">
    <molecule id="Q9NQC1-1"/>
    <property type="nucleotide sequence ID" value="NM_015288.5"/>
</dbReference>
<dbReference type="RefSeq" id="XP_047272994.1">
    <molecule id="Q9NQC1-1"/>
    <property type="nucleotide sequence ID" value="XM_047417038.1"/>
</dbReference>
<dbReference type="RefSeq" id="XP_047272995.1">
    <molecule id="Q9NQC1-1"/>
    <property type="nucleotide sequence ID" value="XM_047417039.1"/>
</dbReference>
<dbReference type="RefSeq" id="XP_054208209.1">
    <molecule id="Q9NQC1-1"/>
    <property type="nucleotide sequence ID" value="XM_054352234.1"/>
</dbReference>
<dbReference type="RefSeq" id="XP_054208210.1">
    <molecule id="Q9NQC1-1"/>
    <property type="nucleotide sequence ID" value="XM_054352235.1"/>
</dbReference>
<dbReference type="SMR" id="Q9NQC1"/>
<dbReference type="BioGRID" id="116924">
    <property type="interactions" value="50"/>
</dbReference>
<dbReference type="ComplexPortal" id="CPX-719">
    <property type="entry name" value="HBO1-4.2 histone acetyltransferase complex"/>
</dbReference>
<dbReference type="ComplexPortal" id="CPX-722">
    <property type="entry name" value="HBO1-5.2 histone acetyltransferase complex"/>
</dbReference>
<dbReference type="CORUM" id="Q9NQC1"/>
<dbReference type="FunCoup" id="Q9NQC1">
    <property type="interactions" value="636"/>
</dbReference>
<dbReference type="IntAct" id="Q9NQC1">
    <property type="interactions" value="33"/>
</dbReference>
<dbReference type="MINT" id="Q9NQC1"/>
<dbReference type="STRING" id="9606.ENSP00000282605"/>
<dbReference type="iPTMnet" id="Q9NQC1"/>
<dbReference type="PhosphoSitePlus" id="Q9NQC1"/>
<dbReference type="BioMuta" id="JADE2"/>
<dbReference type="DMDM" id="116242597"/>
<dbReference type="jPOST" id="Q9NQC1"/>
<dbReference type="MassIVE" id="Q9NQC1"/>
<dbReference type="PaxDb" id="9606-ENSP00000354425"/>
<dbReference type="PeptideAtlas" id="Q9NQC1"/>
<dbReference type="ProteomicsDB" id="12749"/>
<dbReference type="ProteomicsDB" id="82130">
    <molecule id="Q9NQC1-1"/>
</dbReference>
<dbReference type="ProteomicsDB" id="82131">
    <molecule id="Q9NQC1-2"/>
</dbReference>
<dbReference type="ProteomicsDB" id="82132">
    <molecule id="Q9NQC1-3"/>
</dbReference>
<dbReference type="Pumba" id="Q9NQC1"/>
<dbReference type="Antibodypedia" id="14678">
    <property type="antibodies" value="48 antibodies from 12 providers"/>
</dbReference>
<dbReference type="DNASU" id="23338"/>
<dbReference type="Ensembl" id="ENST00000395003.5">
    <molecule id="Q9NQC1-1"/>
    <property type="protein sequence ID" value="ENSP00000378451.1"/>
    <property type="gene ID" value="ENSG00000043143.22"/>
</dbReference>
<dbReference type="Ensembl" id="ENST00000430087.2">
    <molecule id="Q9NQC1-3"/>
    <property type="protein sequence ID" value="ENSP00000396026.2"/>
    <property type="gene ID" value="ENSG00000043143.22"/>
</dbReference>
<dbReference type="GeneID" id="23338"/>
<dbReference type="KEGG" id="hsa:23338"/>
<dbReference type="UCSC" id="uc003kzm.3">
    <molecule id="Q9NQC1-1"/>
    <property type="organism name" value="human"/>
</dbReference>
<dbReference type="AGR" id="HGNC:22984"/>
<dbReference type="CTD" id="23338"/>
<dbReference type="DisGeNET" id="23338"/>
<dbReference type="GeneCards" id="JADE2"/>
<dbReference type="HGNC" id="HGNC:22984">
    <property type="gene designation" value="JADE2"/>
</dbReference>
<dbReference type="HPA" id="ENSG00000043143">
    <property type="expression patterns" value="Low tissue specificity"/>
</dbReference>
<dbReference type="MIM" id="610515">
    <property type="type" value="gene"/>
</dbReference>
<dbReference type="neXtProt" id="NX_Q9NQC1"/>
<dbReference type="OpenTargets" id="ENSG00000043143"/>
<dbReference type="PharmGKB" id="PA128394627"/>
<dbReference type="VEuPathDB" id="HostDB:ENSG00000043143"/>
<dbReference type="eggNOG" id="KOG0954">
    <property type="taxonomic scope" value="Eukaryota"/>
</dbReference>
<dbReference type="GeneTree" id="ENSGT00940000158570"/>
<dbReference type="HOGENOM" id="CLU_016215_2_0_1"/>
<dbReference type="InParanoid" id="Q9NQC1"/>
<dbReference type="OrthoDB" id="20839at2759"/>
<dbReference type="PAN-GO" id="Q9NQC1">
    <property type="GO annotations" value="2 GO annotations based on evolutionary models"/>
</dbReference>
<dbReference type="PhylomeDB" id="Q9NQC1"/>
<dbReference type="TreeFam" id="TF316118"/>
<dbReference type="PathwayCommons" id="Q9NQC1"/>
<dbReference type="Reactome" id="R-HSA-3214847">
    <property type="pathway name" value="HATs acetylate histones"/>
</dbReference>
<dbReference type="SignaLink" id="Q9NQC1"/>
<dbReference type="UniPathway" id="UPA00143"/>
<dbReference type="BioGRID-ORCS" id="23338">
    <property type="hits" value="25 hits in 1166 CRISPR screens"/>
</dbReference>
<dbReference type="ChiTaRS" id="JADE2">
    <property type="organism name" value="human"/>
</dbReference>
<dbReference type="GenomeRNAi" id="23338"/>
<dbReference type="Pharos" id="Q9NQC1">
    <property type="development level" value="Tbio"/>
</dbReference>
<dbReference type="PRO" id="PR:Q9NQC1"/>
<dbReference type="Proteomes" id="UP000005640">
    <property type="component" value="Chromosome 5"/>
</dbReference>
<dbReference type="RNAct" id="Q9NQC1">
    <property type="molecule type" value="protein"/>
</dbReference>
<dbReference type="Bgee" id="ENSG00000043143">
    <property type="expression patterns" value="Expressed in palpebral conjunctiva and 185 other cell types or tissues"/>
</dbReference>
<dbReference type="ExpressionAtlas" id="Q9NQC1">
    <property type="expression patterns" value="baseline and differential"/>
</dbReference>
<dbReference type="GO" id="GO:0070062">
    <property type="term" value="C:extracellular exosome"/>
    <property type="evidence" value="ECO:0007005"/>
    <property type="project" value="UniProtKB"/>
</dbReference>
<dbReference type="GO" id="GO:0000123">
    <property type="term" value="C:histone acetyltransferase complex"/>
    <property type="evidence" value="ECO:0000314"/>
    <property type="project" value="UniProtKB"/>
</dbReference>
<dbReference type="GO" id="GO:0005654">
    <property type="term" value="C:nucleoplasm"/>
    <property type="evidence" value="ECO:0000314"/>
    <property type="project" value="HPA"/>
</dbReference>
<dbReference type="GO" id="GO:0043997">
    <property type="term" value="F:histone H4K12 acetyltransferase activity"/>
    <property type="evidence" value="ECO:0000314"/>
    <property type="project" value="UniProtKB"/>
</dbReference>
<dbReference type="GO" id="GO:0043995">
    <property type="term" value="F:histone H4K5 acetyltransferase activity"/>
    <property type="evidence" value="ECO:0000314"/>
    <property type="project" value="UniProtKB"/>
</dbReference>
<dbReference type="GO" id="GO:0043996">
    <property type="term" value="F:histone H4K8 acetyltransferase activity"/>
    <property type="evidence" value="ECO:0000314"/>
    <property type="project" value="UniProtKB"/>
</dbReference>
<dbReference type="GO" id="GO:0008270">
    <property type="term" value="F:zinc ion binding"/>
    <property type="evidence" value="ECO:0007669"/>
    <property type="project" value="UniProtKB-KW"/>
</dbReference>
<dbReference type="GO" id="GO:0016567">
    <property type="term" value="P:protein ubiquitination"/>
    <property type="evidence" value="ECO:0007669"/>
    <property type="project" value="UniProtKB-UniPathway"/>
</dbReference>
<dbReference type="GO" id="GO:0051726">
    <property type="term" value="P:regulation of cell cycle"/>
    <property type="evidence" value="ECO:0000314"/>
    <property type="project" value="ComplexPortal"/>
</dbReference>
<dbReference type="GO" id="GO:0001558">
    <property type="term" value="P:regulation of cell growth"/>
    <property type="evidence" value="ECO:0000250"/>
    <property type="project" value="ComplexPortal"/>
</dbReference>
<dbReference type="GO" id="GO:2000278">
    <property type="term" value="P:regulation of DNA biosynthetic process"/>
    <property type="evidence" value="ECO:0000314"/>
    <property type="project" value="ComplexPortal"/>
</dbReference>
<dbReference type="GO" id="GO:0006275">
    <property type="term" value="P:regulation of DNA replication"/>
    <property type="evidence" value="ECO:0000314"/>
    <property type="project" value="ComplexPortal"/>
</dbReference>
<dbReference type="GO" id="GO:0006355">
    <property type="term" value="P:regulation of DNA-templated transcription"/>
    <property type="evidence" value="ECO:0000250"/>
    <property type="project" value="ComplexPortal"/>
</dbReference>
<dbReference type="GO" id="GO:0006357">
    <property type="term" value="P:regulation of transcription by RNA polymerase II"/>
    <property type="evidence" value="ECO:0000318"/>
    <property type="project" value="GO_Central"/>
</dbReference>
<dbReference type="CDD" id="cd15705">
    <property type="entry name" value="ePHD_JADE2"/>
    <property type="match status" value="1"/>
</dbReference>
<dbReference type="CDD" id="cd15680">
    <property type="entry name" value="PHD_JADE2"/>
    <property type="match status" value="1"/>
</dbReference>
<dbReference type="FunFam" id="3.30.40.10:FF:000004">
    <property type="entry name" value="Jade family PHD finger 2"/>
    <property type="match status" value="1"/>
</dbReference>
<dbReference type="FunFam" id="3.30.40.10:FF:000030">
    <property type="entry name" value="Protein Jade-1 isoform 1"/>
    <property type="match status" value="1"/>
</dbReference>
<dbReference type="Gene3D" id="3.30.40.10">
    <property type="entry name" value="Zinc/RING finger domain, C3HC4 (zinc finger)"/>
    <property type="match status" value="2"/>
</dbReference>
<dbReference type="InterPro" id="IPR019542">
    <property type="entry name" value="Enhancer_polycomb-like_N"/>
</dbReference>
<dbReference type="InterPro" id="IPR034732">
    <property type="entry name" value="EPHD"/>
</dbReference>
<dbReference type="InterPro" id="IPR050701">
    <property type="entry name" value="Histone_Mod_Regulator"/>
</dbReference>
<dbReference type="InterPro" id="IPR039549">
    <property type="entry name" value="JADE2_ePHD"/>
</dbReference>
<dbReference type="InterPro" id="IPR039548">
    <property type="entry name" value="JADE2_PHD"/>
</dbReference>
<dbReference type="InterPro" id="IPR019786">
    <property type="entry name" value="Zinc_finger_PHD-type_CS"/>
</dbReference>
<dbReference type="InterPro" id="IPR011011">
    <property type="entry name" value="Znf_FYVE_PHD"/>
</dbReference>
<dbReference type="InterPro" id="IPR001965">
    <property type="entry name" value="Znf_PHD"/>
</dbReference>
<dbReference type="InterPro" id="IPR019787">
    <property type="entry name" value="Znf_PHD-finger"/>
</dbReference>
<dbReference type="InterPro" id="IPR013083">
    <property type="entry name" value="Znf_RING/FYVE/PHD"/>
</dbReference>
<dbReference type="PANTHER" id="PTHR13793:SF84">
    <property type="entry name" value="E3 UBIQUITIN-PROTEIN LIGASE JADE-2"/>
    <property type="match status" value="1"/>
</dbReference>
<dbReference type="PANTHER" id="PTHR13793">
    <property type="entry name" value="PHD FINGER PROTEINS"/>
    <property type="match status" value="1"/>
</dbReference>
<dbReference type="Pfam" id="PF10513">
    <property type="entry name" value="EPL1"/>
    <property type="match status" value="1"/>
</dbReference>
<dbReference type="Pfam" id="PF13831">
    <property type="entry name" value="PHD_2"/>
    <property type="match status" value="1"/>
</dbReference>
<dbReference type="Pfam" id="PF13832">
    <property type="entry name" value="zf-HC5HC2H_2"/>
    <property type="match status" value="1"/>
</dbReference>
<dbReference type="SMART" id="SM00249">
    <property type="entry name" value="PHD"/>
    <property type="match status" value="2"/>
</dbReference>
<dbReference type="SUPFAM" id="SSF57903">
    <property type="entry name" value="FYVE/PHD zinc finger"/>
    <property type="match status" value="1"/>
</dbReference>
<dbReference type="PROSITE" id="PS51805">
    <property type="entry name" value="EPHD"/>
    <property type="match status" value="1"/>
</dbReference>
<dbReference type="PROSITE" id="PS01359">
    <property type="entry name" value="ZF_PHD_1"/>
    <property type="match status" value="1"/>
</dbReference>
<dbReference type="PROSITE" id="PS50016">
    <property type="entry name" value="ZF_PHD_2"/>
    <property type="match status" value="1"/>
</dbReference>
<keyword id="KW-0007">Acetylation</keyword>
<keyword id="KW-0025">Alternative splicing</keyword>
<keyword id="KW-0479">Metal-binding</keyword>
<keyword id="KW-0597">Phosphoprotein</keyword>
<keyword id="KW-1267">Proteomics identification</keyword>
<keyword id="KW-1185">Reference proteome</keyword>
<keyword id="KW-0677">Repeat</keyword>
<keyword id="KW-0808">Transferase</keyword>
<keyword id="KW-0833">Ubl conjugation pathway</keyword>
<keyword id="KW-0862">Zinc</keyword>
<keyword id="KW-0863">Zinc-finger</keyword>
<name>JADE2_HUMAN</name>
<reference key="1">
    <citation type="journal article" date="1996" name="DNA Res.">
        <title>Prediction of the coding sequences of unidentified human genes. VI. The coding sequences of 80 new genes (KIAA0201-KIAA0280) deduced by analysis of cDNA clones from cell line KG-1 and brain.</title>
        <authorList>
            <person name="Nagase T."/>
            <person name="Seki N."/>
            <person name="Ishikawa K."/>
            <person name="Ohira M."/>
            <person name="Kawarabayasi Y."/>
            <person name="Ohara O."/>
            <person name="Tanaka A."/>
            <person name="Kotani H."/>
            <person name="Miyajima N."/>
            <person name="Nomura N."/>
        </authorList>
    </citation>
    <scope>NUCLEOTIDE SEQUENCE [LARGE SCALE MRNA] (ISOFORM 2)</scope>
    <source>
        <tissue>Bone marrow</tissue>
    </source>
</reference>
<reference key="2">
    <citation type="journal article" date="2003" name="DNA Res.">
        <title>Characterization of long cDNA clones from human adult spleen. II. The complete sequences of 81 cDNA clones.</title>
        <authorList>
            <person name="Jikuya H."/>
            <person name="Takano J."/>
            <person name="Kikuno R."/>
            <person name="Hirosawa M."/>
            <person name="Nagase T."/>
            <person name="Nomura N."/>
            <person name="Ohara O."/>
        </authorList>
    </citation>
    <scope>NUCLEOTIDE SEQUENCE [LARGE SCALE MRNA] (ISOFORM 3)</scope>
    <source>
        <tissue>Spleen</tissue>
    </source>
</reference>
<reference key="3">
    <citation type="journal article" date="2004" name="Nature">
        <title>The DNA sequence and comparative analysis of human chromosome 5.</title>
        <authorList>
            <person name="Schmutz J."/>
            <person name="Martin J."/>
            <person name="Terry A."/>
            <person name="Couronne O."/>
            <person name="Grimwood J."/>
            <person name="Lowry S."/>
            <person name="Gordon L.A."/>
            <person name="Scott D."/>
            <person name="Xie G."/>
            <person name="Huang W."/>
            <person name="Hellsten U."/>
            <person name="Tran-Gyamfi M."/>
            <person name="She X."/>
            <person name="Prabhakar S."/>
            <person name="Aerts A."/>
            <person name="Altherr M."/>
            <person name="Bajorek E."/>
            <person name="Black S."/>
            <person name="Branscomb E."/>
            <person name="Caoile C."/>
            <person name="Challacombe J.F."/>
            <person name="Chan Y.M."/>
            <person name="Denys M."/>
            <person name="Detter J.C."/>
            <person name="Escobar J."/>
            <person name="Flowers D."/>
            <person name="Fotopulos D."/>
            <person name="Glavina T."/>
            <person name="Gomez M."/>
            <person name="Gonzales E."/>
            <person name="Goodstein D."/>
            <person name="Grigoriev I."/>
            <person name="Groza M."/>
            <person name="Hammon N."/>
            <person name="Hawkins T."/>
            <person name="Haydu L."/>
            <person name="Israni S."/>
            <person name="Jett J."/>
            <person name="Kadner K."/>
            <person name="Kimball H."/>
            <person name="Kobayashi A."/>
            <person name="Lopez F."/>
            <person name="Lou Y."/>
            <person name="Martinez D."/>
            <person name="Medina C."/>
            <person name="Morgan J."/>
            <person name="Nandkeshwar R."/>
            <person name="Noonan J.P."/>
            <person name="Pitluck S."/>
            <person name="Pollard M."/>
            <person name="Predki P."/>
            <person name="Priest J."/>
            <person name="Ramirez L."/>
            <person name="Retterer J."/>
            <person name="Rodriguez A."/>
            <person name="Rogers S."/>
            <person name="Salamov A."/>
            <person name="Salazar A."/>
            <person name="Thayer N."/>
            <person name="Tice H."/>
            <person name="Tsai M."/>
            <person name="Ustaszewska A."/>
            <person name="Vo N."/>
            <person name="Wheeler J."/>
            <person name="Wu K."/>
            <person name="Yang J."/>
            <person name="Dickson M."/>
            <person name="Cheng J.-F."/>
            <person name="Eichler E.E."/>
            <person name="Olsen A."/>
            <person name="Pennacchio L.A."/>
            <person name="Rokhsar D.S."/>
            <person name="Richardson P."/>
            <person name="Lucas S.M."/>
            <person name="Myers R.M."/>
            <person name="Rubin E.M."/>
        </authorList>
    </citation>
    <scope>NUCLEOTIDE SEQUENCE [LARGE SCALE GENOMIC DNA]</scope>
</reference>
<reference key="4">
    <citation type="submission" date="2005-09" db="EMBL/GenBank/DDBJ databases">
        <authorList>
            <person name="Mural R.J."/>
            <person name="Istrail S."/>
            <person name="Sutton G."/>
            <person name="Florea L."/>
            <person name="Halpern A.L."/>
            <person name="Mobarry C.M."/>
            <person name="Lippert R."/>
            <person name="Walenz B."/>
            <person name="Shatkay H."/>
            <person name="Dew I."/>
            <person name="Miller J.R."/>
            <person name="Flanigan M.J."/>
            <person name="Edwards N.J."/>
            <person name="Bolanos R."/>
            <person name="Fasulo D."/>
            <person name="Halldorsson B.V."/>
            <person name="Hannenhalli S."/>
            <person name="Turner R."/>
            <person name="Yooseph S."/>
            <person name="Lu F."/>
            <person name="Nusskern D.R."/>
            <person name="Shue B.C."/>
            <person name="Zheng X.H."/>
            <person name="Zhong F."/>
            <person name="Delcher A.L."/>
            <person name="Huson D.H."/>
            <person name="Kravitz S.A."/>
            <person name="Mouchard L."/>
            <person name="Reinert K."/>
            <person name="Remington K.A."/>
            <person name="Clark A.G."/>
            <person name="Waterman M.S."/>
            <person name="Eichler E.E."/>
            <person name="Adams M.D."/>
            <person name="Hunkapiller M.W."/>
            <person name="Myers E.W."/>
            <person name="Venter J.C."/>
        </authorList>
    </citation>
    <scope>NUCLEOTIDE SEQUENCE [LARGE SCALE GENOMIC DNA]</scope>
</reference>
<reference key="5">
    <citation type="journal article" date="2004" name="Genome Res.">
        <title>The status, quality, and expansion of the NIH full-length cDNA project: the Mammalian Gene Collection (MGC).</title>
        <authorList>
            <consortium name="The MGC Project Team"/>
        </authorList>
    </citation>
    <scope>NUCLEOTIDE SEQUENCE [LARGE SCALE MRNA] (ISOFORMS 1 AND 2)</scope>
    <source>
        <tissue>Melanoma</tissue>
        <tissue>Uterus</tissue>
    </source>
</reference>
<reference key="6">
    <citation type="submission" date="1999-12" db="EMBL/GenBank/DDBJ databases">
        <title>Isolation and characterisation of a 64 kDa protein associated with the lysosomal/autophagic compartment.</title>
        <authorList>
            <person name="Tesmann S."/>
            <person name="Biederbick A."/>
            <person name="Elsaesser H.P."/>
        </authorList>
    </citation>
    <scope>NUCLEOTIDE SEQUENCE [MRNA] OF 202-790 (ISOFORM 1)</scope>
</reference>
<reference key="7">
    <citation type="journal article" date="2003" name="Mol. Cell. Biol.">
        <title>Identification of Jade1, a gene encoding a PHD zinc finger protein, in a gene trap mutagenesis screen for genes involved in anteroposterior axis development.</title>
        <authorList>
            <person name="Tzouanacou E."/>
            <person name="Tweedie S."/>
            <person name="Wilson V."/>
        </authorList>
    </citation>
    <scope>IDENTIFICATION</scope>
</reference>
<reference key="8">
    <citation type="journal article" date="2006" name="Mol. Cell">
        <title>ING tumor suppressor proteins are critical regulators of chromatin acetylation required for genome expression and perpetuation.</title>
        <authorList>
            <person name="Doyon Y."/>
            <person name="Cayrou C."/>
            <person name="Ullah M."/>
            <person name="Landry A.-J."/>
            <person name="Cote V."/>
            <person name="Selleck W."/>
            <person name="Lane W.S."/>
            <person name="Tan S."/>
            <person name="Yang X.-J."/>
            <person name="Cote J."/>
        </authorList>
    </citation>
    <scope>FUNCTION IN HISTONE H4 ACETYLATION</scope>
    <scope>IDENTIFICATION BY MASS SPECTROMETRY</scope>
    <scope>IDENTIFICATION IN THE HBO1 COMPLEX</scope>
</reference>
<reference key="9">
    <citation type="journal article" date="2008" name="Proc. Natl. Acad. Sci. U.S.A.">
        <title>A quantitative atlas of mitotic phosphorylation.</title>
        <authorList>
            <person name="Dephoure N."/>
            <person name="Zhou C."/>
            <person name="Villen J."/>
            <person name="Beausoleil S.A."/>
            <person name="Bakalarski C.E."/>
            <person name="Elledge S.J."/>
            <person name="Gygi S.P."/>
        </authorList>
    </citation>
    <scope>IDENTIFICATION BY MASS SPECTROMETRY [LARGE SCALE ANALYSIS]</scope>
    <source>
        <tissue>Cervix carcinoma</tissue>
    </source>
</reference>
<reference key="10">
    <citation type="journal article" date="2009" name="Science">
        <title>Lysine acetylation targets protein complexes and co-regulates major cellular functions.</title>
        <authorList>
            <person name="Choudhary C."/>
            <person name="Kumar C."/>
            <person name="Gnad F."/>
            <person name="Nielsen M.L."/>
            <person name="Rehman M."/>
            <person name="Walther T.C."/>
            <person name="Olsen J.V."/>
            <person name="Mann M."/>
        </authorList>
    </citation>
    <scope>ACETYLATION [LARGE SCALE ANALYSIS] AT LYS-32; LYS-38 AND LYS-298</scope>
    <scope>IDENTIFICATION BY MASS SPECTROMETRY [LARGE SCALE ANALYSIS]</scope>
</reference>
<reference key="11">
    <citation type="journal article" date="2013" name="J. Proteome Res.">
        <title>Toward a comprehensive characterization of a human cancer cell phosphoproteome.</title>
        <authorList>
            <person name="Zhou H."/>
            <person name="Di Palma S."/>
            <person name="Preisinger C."/>
            <person name="Peng M."/>
            <person name="Polat A.N."/>
            <person name="Heck A.J."/>
            <person name="Mohammed S."/>
        </authorList>
    </citation>
    <scope>PHOSPHORYLATION [LARGE SCALE ANALYSIS] AT SER-9</scope>
    <scope>IDENTIFICATION BY MASS SPECTROMETRY [LARGE SCALE ANALYSIS]</scope>
    <source>
        <tissue>Cervix carcinoma</tissue>
    </source>
</reference>
<reference key="12">
    <citation type="journal article" date="2014" name="J. Proteomics">
        <title>An enzyme assisted RP-RPLC approach for in-depth analysis of human liver phosphoproteome.</title>
        <authorList>
            <person name="Bian Y."/>
            <person name="Song C."/>
            <person name="Cheng K."/>
            <person name="Dong M."/>
            <person name="Wang F."/>
            <person name="Huang J."/>
            <person name="Sun D."/>
            <person name="Wang L."/>
            <person name="Ye M."/>
            <person name="Zou H."/>
        </authorList>
    </citation>
    <scope>PHOSPHORYLATION [LARGE SCALE ANALYSIS] AT SER-15</scope>
    <scope>IDENTIFICATION BY MASS SPECTROMETRY [LARGE SCALE ANALYSIS]</scope>
    <source>
        <tissue>Liver</tissue>
    </source>
</reference>
<reference key="13">
    <citation type="journal article" date="2014" name="Mol. Cell">
        <title>Destabilizing LSD1 by Jade-2 promotes neurogenesis: an antibraking system in neural development.</title>
        <authorList>
            <person name="Han X."/>
            <person name="Gui B."/>
            <person name="Xiong C."/>
            <person name="Zhao L."/>
            <person name="Liang J."/>
            <person name="Sun L."/>
            <person name="Yang X."/>
            <person name="Yu W."/>
            <person name="Si W."/>
            <person name="Yan R."/>
            <person name="Yi X."/>
            <person name="Zhang D."/>
            <person name="Li W."/>
            <person name="Li L."/>
            <person name="Yang J."/>
            <person name="Wang Y."/>
            <person name="Sun Y.E."/>
            <person name="Zhang D."/>
            <person name="Meng A."/>
            <person name="Shang Y."/>
        </authorList>
    </citation>
    <scope>FUNCTION</scope>
    <scope>CATALYTIC ACTIVITY</scope>
    <scope>INTERACTION WITH KDM1A</scope>
    <scope>DOMAIN</scope>
    <scope>MUTAGENESIS OF CYS-202 AND CYS-243</scope>
</reference>
<organism>
    <name type="scientific">Homo sapiens</name>
    <name type="common">Human</name>
    <dbReference type="NCBI Taxonomy" id="9606"/>
    <lineage>
        <taxon>Eukaryota</taxon>
        <taxon>Metazoa</taxon>
        <taxon>Chordata</taxon>
        <taxon>Craniata</taxon>
        <taxon>Vertebrata</taxon>
        <taxon>Euteleostomi</taxon>
        <taxon>Mammalia</taxon>
        <taxon>Eutheria</taxon>
        <taxon>Euarchontoglires</taxon>
        <taxon>Primates</taxon>
        <taxon>Haplorrhini</taxon>
        <taxon>Catarrhini</taxon>
        <taxon>Hominidae</taxon>
        <taxon>Homo</taxon>
    </lineage>
</organism>
<protein>
    <recommendedName>
        <fullName evidence="9">E3 ubiquitin-protein ligase Jade-2</fullName>
        <ecNumber evidence="6">2.3.2.27</ecNumber>
    </recommendedName>
    <alternativeName>
        <fullName>Jade family PHD finger protein 2</fullName>
    </alternativeName>
    <alternativeName>
        <fullName>PHD finger protein 15</fullName>
    </alternativeName>
</protein>
<feature type="chain" id="PRO_0000059308" description="E3 ubiquitin-protein ligase Jade-2">
    <location>
        <begin position="1"/>
        <end position="790"/>
    </location>
</feature>
<feature type="zinc finger region" description="PHD-type 1" evidence="2">
    <location>
        <begin position="199"/>
        <end position="249"/>
    </location>
</feature>
<feature type="zinc finger region" description="C2HC pre-PHD-type" evidence="3">
    <location>
        <begin position="251"/>
        <end position="285"/>
    </location>
</feature>
<feature type="zinc finger region" description="PHD-type 2" evidence="3">
    <location>
        <begin position="309"/>
        <end position="365"/>
    </location>
</feature>
<feature type="region of interest" description="Disordered" evidence="4">
    <location>
        <begin position="1"/>
        <end position="52"/>
    </location>
</feature>
<feature type="region of interest" description="Disordered" evidence="4">
    <location>
        <begin position="111"/>
        <end position="130"/>
    </location>
</feature>
<feature type="region of interest" description="Disordered" evidence="4">
    <location>
        <begin position="361"/>
        <end position="386"/>
    </location>
</feature>
<feature type="region of interest" description="Disordered" evidence="4">
    <location>
        <begin position="578"/>
        <end position="777"/>
    </location>
</feature>
<feature type="compositionally biased region" description="Low complexity" evidence="4">
    <location>
        <begin position="9"/>
        <end position="28"/>
    </location>
</feature>
<feature type="compositionally biased region" description="Polar residues" evidence="4">
    <location>
        <begin position="372"/>
        <end position="381"/>
    </location>
</feature>
<feature type="compositionally biased region" description="Basic residues" evidence="4">
    <location>
        <begin position="593"/>
        <end position="606"/>
    </location>
</feature>
<feature type="compositionally biased region" description="Low complexity" evidence="4">
    <location>
        <begin position="684"/>
        <end position="693"/>
    </location>
</feature>
<feature type="compositionally biased region" description="Basic and acidic residues" evidence="4">
    <location>
        <begin position="737"/>
        <end position="747"/>
    </location>
</feature>
<feature type="compositionally biased region" description="Acidic residues" evidence="4">
    <location>
        <begin position="757"/>
        <end position="767"/>
    </location>
</feature>
<feature type="modified residue" description="Phosphoserine" evidence="14">
    <location>
        <position position="9"/>
    </location>
</feature>
<feature type="modified residue" description="Phosphoserine" evidence="15">
    <location>
        <position position="15"/>
    </location>
</feature>
<feature type="modified residue" description="N6-acetyllysine" evidence="13">
    <location>
        <position position="32"/>
    </location>
</feature>
<feature type="modified residue" description="N6-acetyllysine" evidence="13">
    <location>
        <position position="38"/>
    </location>
</feature>
<feature type="modified residue" description="Phosphoserine" evidence="1">
    <location>
        <position position="117"/>
    </location>
</feature>
<feature type="modified residue" description="N6-acetyllysine" evidence="13">
    <location>
        <position position="298"/>
    </location>
</feature>
<feature type="splice variant" id="VSP_021050" description="In isoform 3." evidence="7">
    <original>GLSTSFPIDGTFFNSWLAQSVQITAENMAMSEWPLNNGHREDPAPGLLSEELLQDEETLLSFMRDPSLRPGDPARKARGRTRLPAKKKPPPPPPQDGPGSRTTPDKAPKKTWGQDAGSGKGGQGPPTRKPPRRTSSHLPSSPAAGDCPILATPESPPPLAPETPDEAASVAADSDVQVPGPAASPKPLGRLRPPRESKVTRRLPGARPDAGMGPPSAVAERPKVSLHFDTETDGYFSDGEMSDSDVEAEDGGVQRGPREAGAEEVVRMGVLAS</original>
    <variation>ERSGRRAKGKKSDSKRKGCEGSKGSTEKKEKVKAGPDSVLGQLGE</variation>
    <location>
        <begin position="518"/>
        <end position="790"/>
    </location>
</feature>
<feature type="splice variant" id="VSP_021051" description="In isoform 2." evidence="8 10">
    <location>
        <position position="518"/>
    </location>
</feature>
<feature type="sequence variant" id="VAR_053778" description="In dbSNP:rs34200923.">
    <original>R</original>
    <variation>G</variation>
    <location>
        <position position="581"/>
    </location>
</feature>
<feature type="mutagenesis site" description="Loss of E3 ubiquitin-protein ligase activity on KDM1A." evidence="6">
    <original>C</original>
    <variation>A</variation>
    <location>
        <position position="202"/>
    </location>
</feature>
<feature type="mutagenesis site" description="Loss of E3 ubiquitin-protein ligase activity on KDM1A." evidence="6">
    <original>C</original>
    <variation>A</variation>
    <location>
        <position position="243"/>
    </location>
</feature>
<feature type="sequence conflict" description="In Ref. 1; BAA13245." evidence="11" ref="1">
    <original>T</original>
    <variation>I</variation>
    <location>
        <position position="331"/>
    </location>
</feature>
<accession>Q9NQC1</accession>
<accession>D3DQA3</accession>
<accession>Q6IE80</accession>
<accession>Q8TEK0</accession>
<accession>Q92513</accession>
<accession>Q96GQ6</accession>
<evidence type="ECO:0000250" key="1">
    <source>
        <dbReference type="UniProtKB" id="Q6ZQF7"/>
    </source>
</evidence>
<evidence type="ECO:0000255" key="2">
    <source>
        <dbReference type="PROSITE-ProRule" id="PRU00146"/>
    </source>
</evidence>
<evidence type="ECO:0000255" key="3">
    <source>
        <dbReference type="PROSITE-ProRule" id="PRU01146"/>
    </source>
</evidence>
<evidence type="ECO:0000256" key="4">
    <source>
        <dbReference type="SAM" id="MobiDB-lite"/>
    </source>
</evidence>
<evidence type="ECO:0000269" key="5">
    <source>
    </source>
</evidence>
<evidence type="ECO:0000269" key="6">
    <source>
    </source>
</evidence>
<evidence type="ECO:0000303" key="7">
    <source>
    </source>
</evidence>
<evidence type="ECO:0000303" key="8">
    <source>
    </source>
</evidence>
<evidence type="ECO:0000303" key="9">
    <source>
    </source>
</evidence>
<evidence type="ECO:0000303" key="10">
    <source>
    </source>
</evidence>
<evidence type="ECO:0000305" key="11"/>
<evidence type="ECO:0000305" key="12">
    <source>
    </source>
</evidence>
<evidence type="ECO:0007744" key="13">
    <source>
    </source>
</evidence>
<evidence type="ECO:0007744" key="14">
    <source>
    </source>
</evidence>
<evidence type="ECO:0007744" key="15">
    <source>
    </source>
</evidence>
<sequence length="790" mass="87466">MEEKRRKYSISSDNSDTTDSHATSTSASRCSKLPSSTKSGWPRQNEKKPSEVFRTDLITAMKIPDSYQLSPDDYYILADPWRQEWEKGVQVPAGAEAIPEPVVRILPPLEGPPAQASPSSTMLGEGSQPDWPGGSRYDLDEIDAYWLELINSELKEMERPELDELTLERVLEELETLCHQNMARAIETQEGLGIEYDEDVVCDVCRSPEGEDGNEMVFCDKCNVCVHQACYGILKVPTGSWLCRTCALGVQPKCLLCPKRGGALKPTRSGTKWVHVSCALWIPEVSIGCPEKMEPITKISHIPASRWALSCSLCKECTGTCIQCSMPSCVTAFHVTCAFDHGLEMRTILADNDEVKFKSFCQEHSDGGPRNEPTSEPTEPSQAGEDLEKVTLRKQRLQQLEEDFYELVEPAEVAERLDLAEALVDFIYQYWKLKRKANANQPLLTPKTDEVDNLAQQEQDVLYRRLKLFTHLRQDLERVRNLCYMVTRRERTKHAICKLQEQIFHLQMKLIEQDLCRGLSTSFPIDGTFFNSWLAQSVQITAENMAMSEWPLNNGHREDPAPGLLSEELLQDEETLLSFMRDPSLRPGDPARKARGRTRLPAKKKPPPPPPQDGPGSRTTPDKAPKKTWGQDAGSGKGGQGPPTRKPPRRTSSHLPSSPAAGDCPILATPESPPPLAPETPDEAASVAADSDVQVPGPAASPKPLGRLRPPRESKVTRRLPGARPDAGMGPPSAVAERPKVSLHFDTETDGYFSDGEMSDSDVEAEDGGVQRGPREAGAEEVVRMGVLAS</sequence>
<proteinExistence type="evidence at protein level"/>
<gene>
    <name type="primary">JADE2</name>
    <name type="synonym">KIAA0239</name>
    <name type="synonym">PHF15</name>
</gene>
<comment type="function">
    <text evidence="1 5 6">Scaffold subunit of some HBO1 complexes, which have a histone H4 acetyltransferase activity (PubMed:16387653). Acts as an E3 ubiquitin-protein ligase mediating the ubiquitination and subsequent proteasomal degradation of target protein histone demethylase KDM1A (PubMed:25018020). Also acts as a ubiquitin ligase E3 toward itself. Positive regulator of neurogenesis (By similarity).</text>
</comment>
<comment type="catalytic activity">
    <reaction evidence="6">
        <text>S-ubiquitinyl-[E2 ubiquitin-conjugating enzyme]-L-cysteine + [acceptor protein]-L-lysine = [E2 ubiquitin-conjugating enzyme]-L-cysteine + N(6)-ubiquitinyl-[acceptor protein]-L-lysine.</text>
        <dbReference type="EC" id="2.3.2.27"/>
    </reaction>
</comment>
<comment type="pathway">
    <text evidence="12">Protein modification; protein ubiquitination.</text>
</comment>
<comment type="subunit">
    <text evidence="5 6">Component of the HBO1 complex composed at least of ING4 or ING5, MYST2/HBO1, MEAF6, and one of JADE1, JADE2 and JADE3 (PubMed:16387653). Interacts (via C-terminus) with KDM1A (via AOD/Tower domain) (PubMed:25018020).</text>
</comment>
<comment type="interaction">
    <interactant intactId="EBI-2796167">
        <id>Q9NQC1</id>
    </interactant>
    <interactant intactId="EBI-2866661">
        <id>Q9UNL4</id>
        <label>ING4</label>
    </interactant>
    <organismsDiffer>false</organismsDiffer>
    <experiments>4</experiments>
</comment>
<comment type="interaction">
    <interactant intactId="EBI-2796167">
        <id>Q9NQC1</id>
    </interactant>
    <interactant intactId="EBI-488533">
        <id>Q8WYH8</id>
        <label>ING5</label>
    </interactant>
    <organismsDiffer>false</organismsDiffer>
    <experiments>7</experiments>
</comment>
<comment type="interaction">
    <interactant intactId="EBI-10311936">
        <id>Q9NQC1-2</id>
    </interactant>
    <interactant intactId="EBI-852851">
        <id>P01100</id>
        <label>FOS</label>
    </interactant>
    <organismsDiffer>false</organismsDiffer>
    <experiments>3</experiments>
</comment>
<comment type="interaction">
    <interactant intactId="EBI-10311936">
        <id>Q9NQC1-2</id>
    </interactant>
    <interactant intactId="EBI-739467">
        <id>Q9H8Y8</id>
        <label>GORASP2</label>
    </interactant>
    <organismsDiffer>false</organismsDiffer>
    <experiments>3</experiments>
</comment>
<comment type="interaction">
    <interactant intactId="EBI-10311936">
        <id>Q9NQC1-2</id>
    </interactant>
    <interactant intactId="EBI-401755">
        <id>P62993</id>
        <label>GRB2</label>
    </interactant>
    <organismsDiffer>false</organismsDiffer>
    <experiments>3</experiments>
</comment>
<comment type="alternative products">
    <event type="alternative splicing"/>
    <isoform>
        <id>Q9NQC1-1</id>
        <name>1</name>
        <sequence type="displayed"/>
    </isoform>
    <isoform>
        <id>Q9NQC1-2</id>
        <name>2</name>
        <sequence type="described" ref="VSP_021051"/>
    </isoform>
    <isoform>
        <id>Q9NQC1-3</id>
        <name>3</name>
        <sequence type="described" ref="VSP_021050"/>
    </isoform>
</comment>
<comment type="domain">
    <text evidence="6">The first PHD domain is essential for its E3 ubiquitin ligase activity.</text>
</comment>
<comment type="similarity">
    <text evidence="11">Belongs to the JADE family.</text>
</comment>
<comment type="sequence caution" evidence="11">
    <conflict type="erroneous initiation">
        <sequence resource="EMBL-CDS" id="BAA13245"/>
    </conflict>
    <text>Extended N-terminus.</text>
</comment>
<comment type="sequence caution" evidence="11">
    <conflict type="frameshift">
        <sequence resource="EMBL-CDS" id="BAB84949"/>
    </conflict>
</comment>
<comment type="sequence caution" evidence="11">
    <conflict type="erroneous initiation">
        <sequence resource="EMBL-CDS" id="CAB94935"/>
    </conflict>
    <text>Truncated N-terminus.</text>
</comment>